<protein>
    <recommendedName>
        <fullName>Chaperone protein ClpB</fullName>
    </recommendedName>
</protein>
<comment type="function">
    <text evidence="1">Part of a stress-induced multi-chaperone system, it is involved in the recovery of the cell from heat-induced damage, in cooperation with DnaK, DnaJ and GrpE. Acts before DnaK, in the processing of protein aggregates. Protein binding stimulates the ATPase activity; ATP hydrolysis unfolds the denatured protein aggregates, which probably helps expose new hydrophobic binding sites on the surface of ClpB-bound aggregates, contributing to the solubilization and refolding of denatured protein aggregates by DnaK (By similarity).</text>
</comment>
<comment type="subunit">
    <text evidence="1">Homohexamer. The oligomerization is ATP-dependent (By similarity).</text>
</comment>
<comment type="subcellular location">
    <subcellularLocation>
        <location evidence="3">Cytoplasm</location>
    </subcellularLocation>
</comment>
<comment type="domain">
    <text evidence="1">The Clp repeat (R) domain probably functions as a substrate-discriminating domain, recruiting aggregated proteins to the ClpB hexamer and/or stabilizing bound proteins. The NBD2 domain is responsible for oligomerization, whereas the NBD1 domain stabilizes the hexamer probably in an ATP-dependent manner. The movement of the coiled-coil domain is essential for ClpB ability to rescue proteins from an aggregated state, probably by pulling apart large aggregated proteins, which are bound between the coiled-coils motifs of adjacent ClpB subunits in the functional hexamer (By similarity).</text>
</comment>
<comment type="similarity">
    <text evidence="3">Belongs to the ClpA/ClpB family.</text>
</comment>
<comment type="sequence caution" evidence="3">
    <conflict type="erroneous initiation">
        <sequence resource="EMBL-CDS" id="AAG57705"/>
    </conflict>
</comment>
<dbReference type="EMBL" id="AE005174">
    <property type="protein sequence ID" value="AAG57705.1"/>
    <property type="status" value="ALT_INIT"/>
    <property type="molecule type" value="Genomic_DNA"/>
</dbReference>
<dbReference type="EMBL" id="BA000007">
    <property type="protein sequence ID" value="BAB36878.1"/>
    <property type="molecule type" value="Genomic_DNA"/>
</dbReference>
<dbReference type="PIR" id="G91060">
    <property type="entry name" value="G91060"/>
</dbReference>
<dbReference type="RefSeq" id="NP_311482.1">
    <property type="nucleotide sequence ID" value="NC_002695.1"/>
</dbReference>
<dbReference type="RefSeq" id="WP_001235102.1">
    <property type="nucleotide sequence ID" value="NZ_VOAI01000040.1"/>
</dbReference>
<dbReference type="SMR" id="P63285"/>
<dbReference type="STRING" id="155864.Z3886"/>
<dbReference type="GeneID" id="914865"/>
<dbReference type="GeneID" id="93774494"/>
<dbReference type="KEGG" id="ece:Z3886"/>
<dbReference type="KEGG" id="ecs:ECs_3455"/>
<dbReference type="PATRIC" id="fig|386585.9.peg.3611"/>
<dbReference type="eggNOG" id="COG0542">
    <property type="taxonomic scope" value="Bacteria"/>
</dbReference>
<dbReference type="HOGENOM" id="CLU_005070_4_0_6"/>
<dbReference type="OMA" id="VSKMMQG"/>
<dbReference type="Proteomes" id="UP000000558">
    <property type="component" value="Chromosome"/>
</dbReference>
<dbReference type="Proteomes" id="UP000002519">
    <property type="component" value="Chromosome"/>
</dbReference>
<dbReference type="GO" id="GO:0005737">
    <property type="term" value="C:cytoplasm"/>
    <property type="evidence" value="ECO:0007669"/>
    <property type="project" value="UniProtKB-SubCell"/>
</dbReference>
<dbReference type="GO" id="GO:0005524">
    <property type="term" value="F:ATP binding"/>
    <property type="evidence" value="ECO:0007669"/>
    <property type="project" value="UniProtKB-KW"/>
</dbReference>
<dbReference type="GO" id="GO:0016887">
    <property type="term" value="F:ATP hydrolysis activity"/>
    <property type="evidence" value="ECO:0007669"/>
    <property type="project" value="InterPro"/>
</dbReference>
<dbReference type="GO" id="GO:0034605">
    <property type="term" value="P:cellular response to heat"/>
    <property type="evidence" value="ECO:0007669"/>
    <property type="project" value="TreeGrafter"/>
</dbReference>
<dbReference type="GO" id="GO:0042026">
    <property type="term" value="P:protein refolding"/>
    <property type="evidence" value="ECO:0007669"/>
    <property type="project" value="InterPro"/>
</dbReference>
<dbReference type="CDD" id="cd00009">
    <property type="entry name" value="AAA"/>
    <property type="match status" value="1"/>
</dbReference>
<dbReference type="CDD" id="cd19499">
    <property type="entry name" value="RecA-like_ClpB_Hsp104-like"/>
    <property type="match status" value="1"/>
</dbReference>
<dbReference type="FunFam" id="1.10.1780.10:FF:000003">
    <property type="entry name" value="ATP-dependent chaperone ClpB"/>
    <property type="match status" value="1"/>
</dbReference>
<dbReference type="FunFam" id="1.10.8.60:FF:000017">
    <property type="entry name" value="ATP-dependent chaperone ClpB"/>
    <property type="match status" value="1"/>
</dbReference>
<dbReference type="FunFam" id="3.40.50.300:FF:000120">
    <property type="entry name" value="ATP-dependent chaperone ClpB"/>
    <property type="match status" value="1"/>
</dbReference>
<dbReference type="FunFam" id="3.40.50.300:FF:000025">
    <property type="entry name" value="ATP-dependent Clp protease subunit"/>
    <property type="match status" value="1"/>
</dbReference>
<dbReference type="FunFam" id="3.40.50.300:FF:000010">
    <property type="entry name" value="Chaperone clpB 1, putative"/>
    <property type="match status" value="1"/>
</dbReference>
<dbReference type="Gene3D" id="1.10.8.60">
    <property type="match status" value="1"/>
</dbReference>
<dbReference type="Gene3D" id="1.10.1780.10">
    <property type="entry name" value="Clp, N-terminal domain"/>
    <property type="match status" value="1"/>
</dbReference>
<dbReference type="Gene3D" id="3.40.50.300">
    <property type="entry name" value="P-loop containing nucleotide triphosphate hydrolases"/>
    <property type="match status" value="3"/>
</dbReference>
<dbReference type="InterPro" id="IPR003593">
    <property type="entry name" value="AAA+_ATPase"/>
</dbReference>
<dbReference type="InterPro" id="IPR003959">
    <property type="entry name" value="ATPase_AAA_core"/>
</dbReference>
<dbReference type="InterPro" id="IPR017730">
    <property type="entry name" value="Chaperonin_ClpB"/>
</dbReference>
<dbReference type="InterPro" id="IPR019489">
    <property type="entry name" value="Clp_ATPase_C"/>
</dbReference>
<dbReference type="InterPro" id="IPR036628">
    <property type="entry name" value="Clp_N_dom_sf"/>
</dbReference>
<dbReference type="InterPro" id="IPR004176">
    <property type="entry name" value="Clp_R_dom"/>
</dbReference>
<dbReference type="InterPro" id="IPR001270">
    <property type="entry name" value="ClpA/B"/>
</dbReference>
<dbReference type="InterPro" id="IPR018368">
    <property type="entry name" value="ClpA/B_CS1"/>
</dbReference>
<dbReference type="InterPro" id="IPR028299">
    <property type="entry name" value="ClpA/B_CS2"/>
</dbReference>
<dbReference type="InterPro" id="IPR041546">
    <property type="entry name" value="ClpA/ClpB_AAA_lid"/>
</dbReference>
<dbReference type="InterPro" id="IPR050130">
    <property type="entry name" value="ClpA_ClpB"/>
</dbReference>
<dbReference type="InterPro" id="IPR027417">
    <property type="entry name" value="P-loop_NTPase"/>
</dbReference>
<dbReference type="NCBIfam" id="TIGR03346">
    <property type="entry name" value="chaperone_ClpB"/>
    <property type="match status" value="1"/>
</dbReference>
<dbReference type="NCBIfam" id="NF008118">
    <property type="entry name" value="PRK10865.1"/>
    <property type="match status" value="1"/>
</dbReference>
<dbReference type="PANTHER" id="PTHR11638">
    <property type="entry name" value="ATP-DEPENDENT CLP PROTEASE"/>
    <property type="match status" value="1"/>
</dbReference>
<dbReference type="PANTHER" id="PTHR11638:SF18">
    <property type="entry name" value="HEAT SHOCK PROTEIN 104"/>
    <property type="match status" value="1"/>
</dbReference>
<dbReference type="Pfam" id="PF00004">
    <property type="entry name" value="AAA"/>
    <property type="match status" value="1"/>
</dbReference>
<dbReference type="Pfam" id="PF07724">
    <property type="entry name" value="AAA_2"/>
    <property type="match status" value="1"/>
</dbReference>
<dbReference type="Pfam" id="PF17871">
    <property type="entry name" value="AAA_lid_9"/>
    <property type="match status" value="1"/>
</dbReference>
<dbReference type="Pfam" id="PF02861">
    <property type="entry name" value="Clp_N"/>
    <property type="match status" value="2"/>
</dbReference>
<dbReference type="Pfam" id="PF10431">
    <property type="entry name" value="ClpB_D2-small"/>
    <property type="match status" value="1"/>
</dbReference>
<dbReference type="PRINTS" id="PR00300">
    <property type="entry name" value="CLPPROTEASEA"/>
</dbReference>
<dbReference type="SMART" id="SM00382">
    <property type="entry name" value="AAA"/>
    <property type="match status" value="2"/>
</dbReference>
<dbReference type="SMART" id="SM01086">
    <property type="entry name" value="ClpB_D2-small"/>
    <property type="match status" value="1"/>
</dbReference>
<dbReference type="SUPFAM" id="SSF81923">
    <property type="entry name" value="Double Clp-N motif"/>
    <property type="match status" value="1"/>
</dbReference>
<dbReference type="SUPFAM" id="SSF52540">
    <property type="entry name" value="P-loop containing nucleoside triphosphate hydrolases"/>
    <property type="match status" value="2"/>
</dbReference>
<dbReference type="PROSITE" id="PS51903">
    <property type="entry name" value="CLP_R"/>
    <property type="match status" value="1"/>
</dbReference>
<dbReference type="PROSITE" id="PS00870">
    <property type="entry name" value="CLPAB_1"/>
    <property type="match status" value="1"/>
</dbReference>
<dbReference type="PROSITE" id="PS00871">
    <property type="entry name" value="CLPAB_2"/>
    <property type="match status" value="1"/>
</dbReference>
<keyword id="KW-0007">Acetylation</keyword>
<keyword id="KW-0067">ATP-binding</keyword>
<keyword id="KW-0143">Chaperone</keyword>
<keyword id="KW-0175">Coiled coil</keyword>
<keyword id="KW-0963">Cytoplasm</keyword>
<keyword id="KW-0547">Nucleotide-binding</keyword>
<keyword id="KW-1185">Reference proteome</keyword>
<keyword id="KW-0677">Repeat</keyword>
<keyword id="KW-0346">Stress response</keyword>
<proteinExistence type="inferred from homology"/>
<sequence>MRLDRLTNKFQLALADAQSLALGHDNQFIEPLHLMSALLNQEGGSVSPLLTSAGINAGQLRTDINQALNRLPQVEGTGGDVQPSQDLVRVLNLCDKLAQKRGDNFISSELFVLAALESRGTLADILKAAGATTANITQAIEQMRGGESVNDQGAEDQRQALKKYTIDLTERAEQGKLDPVIGRDEEIRRTIQVLQRRTKNNPVLIGEPGVGKTAIVEGLAQRIINGEVPEGLKGRRVLALDMGALVAGAKYRGEFEERLKGVLNDLAKQEGNVILFIDELHTMVGAGKADGAMDAGNMLKPALARGELHCVGATTLDEYRQYIEKDAALERRFQKVFVAEPSVEDTIAILRGLKERYELHHHVQITDPAIVAAATLSHRYIADRQLPDKAIDLIDEAASSIRMQIDSKPEELDRLDRRIIQLKLEQQALMKESDEASKKRLDMLNEELSDKERQYSELEEEWKAEKASLSGTQTIKAELEQAKIAIEQARRVGDLARMSELQYGKIPELEKQLEAATQLEGKTMRLLRNKVTDAEIAEVLARWTGIPVSRMMESEREKLLRMEQELHHRVIGQNEAVDAVSNAIRRSRAGLADPNRPIGSFLFLGPTGVGKTELCKALANFMFDSDEAMVRIDMSEFMEKHSVSRLVGAPPGYVGYEEGGYLTEAVRRRPYSVILLDEVEKAHPDVFNILLQVLDDGRLTDGQGRTVDFRNTVVIMTSNLGSDLIQERFGELDYAHMKELVLGVVSHNFRPEFINRIDEVVVFHPLGEQHIASIAQIQLKRLYKRLEERGYEIHISDEALKLLSENGYDPVYGARPLKRAIQQQIENPLAQQILSGELVPGKVIRLEVNEDRIVAVQ</sequence>
<accession>P63285</accession>
<accession>P03815</accession>
<feature type="chain" id="PRO_0000191120" description="Chaperone protein ClpB">
    <location>
        <begin position="1"/>
        <end position="857"/>
    </location>
</feature>
<feature type="domain" description="Clp R" evidence="2">
    <location>
        <begin position="3"/>
        <end position="146"/>
    </location>
</feature>
<feature type="region of interest" description="Repeat 1" evidence="2">
    <location>
        <begin position="6"/>
        <end position="71"/>
    </location>
</feature>
<feature type="region of interest" description="Repeat 2" evidence="2">
    <location>
        <begin position="83"/>
        <end position="146"/>
    </location>
</feature>
<feature type="region of interest" description="NBD1" evidence="1">
    <location>
        <begin position="159"/>
        <end position="340"/>
    </location>
</feature>
<feature type="region of interest" description="Linker" evidence="1">
    <location>
        <begin position="341"/>
        <end position="545"/>
    </location>
</feature>
<feature type="region of interest" description="NBD2" evidence="1">
    <location>
        <begin position="555"/>
        <end position="765"/>
    </location>
</feature>
<feature type="region of interest" description="C-terminal" evidence="1">
    <location>
        <begin position="766"/>
        <end position="857"/>
    </location>
</feature>
<feature type="coiled-coil region" evidence="1">
    <location>
        <begin position="391"/>
        <end position="525"/>
    </location>
</feature>
<feature type="binding site" evidence="1">
    <location>
        <begin position="206"/>
        <end position="213"/>
    </location>
    <ligand>
        <name>ATP</name>
        <dbReference type="ChEBI" id="CHEBI:30616"/>
        <label>1</label>
    </ligand>
</feature>
<feature type="binding site" evidence="1">
    <location>
        <begin position="605"/>
        <end position="612"/>
    </location>
    <ligand>
        <name>ATP</name>
        <dbReference type="ChEBI" id="CHEBI:30616"/>
        <label>2</label>
    </ligand>
</feature>
<feature type="modified residue" description="N6-acetyllysine" evidence="1">
    <location>
        <position position="96"/>
    </location>
</feature>
<feature type="modified residue" description="N6-acetyllysine" evidence="1">
    <location>
        <position position="176"/>
    </location>
</feature>
<feature type="modified residue" description="N6-acetyllysine" evidence="1">
    <location>
        <position position="640"/>
    </location>
</feature>
<name>CLPB_ECO57</name>
<gene>
    <name type="primary">clpB</name>
    <name type="synonym">htpM</name>
    <name type="ordered locus">Z3886</name>
    <name type="ordered locus">ECs3455</name>
</gene>
<evidence type="ECO:0000250" key="1"/>
<evidence type="ECO:0000255" key="2">
    <source>
        <dbReference type="PROSITE-ProRule" id="PRU01251"/>
    </source>
</evidence>
<evidence type="ECO:0000305" key="3"/>
<organism>
    <name type="scientific">Escherichia coli O157:H7</name>
    <dbReference type="NCBI Taxonomy" id="83334"/>
    <lineage>
        <taxon>Bacteria</taxon>
        <taxon>Pseudomonadati</taxon>
        <taxon>Pseudomonadota</taxon>
        <taxon>Gammaproteobacteria</taxon>
        <taxon>Enterobacterales</taxon>
        <taxon>Enterobacteriaceae</taxon>
        <taxon>Escherichia</taxon>
    </lineage>
</organism>
<reference key="1">
    <citation type="journal article" date="2001" name="Nature">
        <title>Genome sequence of enterohaemorrhagic Escherichia coli O157:H7.</title>
        <authorList>
            <person name="Perna N.T."/>
            <person name="Plunkett G. III"/>
            <person name="Burland V."/>
            <person name="Mau B."/>
            <person name="Glasner J.D."/>
            <person name="Rose D.J."/>
            <person name="Mayhew G.F."/>
            <person name="Evans P.S."/>
            <person name="Gregor J."/>
            <person name="Kirkpatrick H.A."/>
            <person name="Posfai G."/>
            <person name="Hackett J."/>
            <person name="Klink S."/>
            <person name="Boutin A."/>
            <person name="Shao Y."/>
            <person name="Miller L."/>
            <person name="Grotbeck E.J."/>
            <person name="Davis N.W."/>
            <person name="Lim A."/>
            <person name="Dimalanta E.T."/>
            <person name="Potamousis K."/>
            <person name="Apodaca J."/>
            <person name="Anantharaman T.S."/>
            <person name="Lin J."/>
            <person name="Yen G."/>
            <person name="Schwartz D.C."/>
            <person name="Welch R.A."/>
            <person name="Blattner F.R."/>
        </authorList>
    </citation>
    <scope>NUCLEOTIDE SEQUENCE [LARGE SCALE GENOMIC DNA]</scope>
    <source>
        <strain>O157:H7 / EDL933 / ATCC 700927 / EHEC</strain>
    </source>
</reference>
<reference key="2">
    <citation type="journal article" date="2001" name="DNA Res.">
        <title>Complete genome sequence of enterohemorrhagic Escherichia coli O157:H7 and genomic comparison with a laboratory strain K-12.</title>
        <authorList>
            <person name="Hayashi T."/>
            <person name="Makino K."/>
            <person name="Ohnishi M."/>
            <person name="Kurokawa K."/>
            <person name="Ishii K."/>
            <person name="Yokoyama K."/>
            <person name="Han C.-G."/>
            <person name="Ohtsubo E."/>
            <person name="Nakayama K."/>
            <person name="Murata T."/>
            <person name="Tanaka M."/>
            <person name="Tobe T."/>
            <person name="Iida T."/>
            <person name="Takami H."/>
            <person name="Honda T."/>
            <person name="Sasakawa C."/>
            <person name="Ogasawara N."/>
            <person name="Yasunaga T."/>
            <person name="Kuhara S."/>
            <person name="Shiba T."/>
            <person name="Hattori M."/>
            <person name="Shinagawa H."/>
        </authorList>
    </citation>
    <scope>NUCLEOTIDE SEQUENCE [LARGE SCALE GENOMIC DNA]</scope>
    <source>
        <strain>O157:H7 / Sakai / RIMD 0509952 / EHEC</strain>
    </source>
</reference>